<dbReference type="EMBL" id="AB028622">
    <property type="protein sequence ID" value="BAB01390.1"/>
    <property type="status" value="ALT_SEQ"/>
    <property type="molecule type" value="Genomic_DNA"/>
</dbReference>
<dbReference type="EMBL" id="CP002686">
    <property type="protein sequence ID" value="AEE76584.1"/>
    <property type="status" value="ALT_SEQ"/>
    <property type="molecule type" value="Genomic_DNA"/>
</dbReference>
<dbReference type="RefSeq" id="NP_001154637.1">
    <property type="nucleotide sequence ID" value="NM_001161165.1"/>
</dbReference>
<dbReference type="SMR" id="Q9LRK0"/>
<dbReference type="PeptideAtlas" id="Q9LRK0"/>
<dbReference type="GeneID" id="3768890"/>
<dbReference type="KEGG" id="ath:AT3G22057"/>
<dbReference type="Araport" id="AT3G22057"/>
<dbReference type="TAIR" id="AT3G22057"/>
<dbReference type="InParanoid" id="Q9LRK0"/>
<dbReference type="Proteomes" id="UP000006548">
    <property type="component" value="Chromosome 3"/>
</dbReference>
<dbReference type="ExpressionAtlas" id="Q9LRK0">
    <property type="expression patterns" value="baseline and differential"/>
</dbReference>
<dbReference type="GO" id="GO:0005576">
    <property type="term" value="C:extracellular region"/>
    <property type="evidence" value="ECO:0007669"/>
    <property type="project" value="UniProtKB-SubCell"/>
</dbReference>
<dbReference type="CDD" id="cd23509">
    <property type="entry name" value="Gnk2-like"/>
    <property type="match status" value="2"/>
</dbReference>
<dbReference type="Gene3D" id="3.30.430.20">
    <property type="entry name" value="Gnk2 domain, C-X8-C-X2-C motif"/>
    <property type="match status" value="2"/>
</dbReference>
<dbReference type="InterPro" id="IPR050581">
    <property type="entry name" value="CRR_secretory_protein"/>
</dbReference>
<dbReference type="InterPro" id="IPR002902">
    <property type="entry name" value="GNK2"/>
</dbReference>
<dbReference type="InterPro" id="IPR038408">
    <property type="entry name" value="GNK2_sf"/>
</dbReference>
<dbReference type="PANTHER" id="PTHR32411:SF54">
    <property type="entry name" value="CYSTEINE-RICH REPEAT SECRETORY PROTEIN 29-RELATED"/>
    <property type="match status" value="1"/>
</dbReference>
<dbReference type="PANTHER" id="PTHR32411">
    <property type="entry name" value="CYSTEINE-RICH REPEAT SECRETORY PROTEIN 38-RELATED"/>
    <property type="match status" value="1"/>
</dbReference>
<dbReference type="Pfam" id="PF01657">
    <property type="entry name" value="Stress-antifung"/>
    <property type="match status" value="2"/>
</dbReference>
<dbReference type="PROSITE" id="PS51473">
    <property type="entry name" value="GNK2"/>
    <property type="match status" value="2"/>
</dbReference>
<proteinExistence type="uncertain"/>
<feature type="signal peptide" evidence="1">
    <location>
        <begin position="1"/>
        <end position="29"/>
    </location>
</feature>
<feature type="chain" id="PRO_0000296165" description="Putative cysteine-rich repeat secretory protein 37">
    <location>
        <begin position="30"/>
        <end position="254"/>
    </location>
</feature>
<feature type="domain" description="Gnk2-homologous 1" evidence="2">
    <location>
        <begin position="36"/>
        <end position="138"/>
    </location>
</feature>
<feature type="domain" description="Gnk2-homologous 2" evidence="2">
    <location>
        <begin position="145"/>
        <end position="251"/>
    </location>
</feature>
<comment type="subcellular location">
    <subcellularLocation>
        <location evidence="3">Secreted</location>
    </subcellularLocation>
</comment>
<comment type="similarity">
    <text evidence="3">Belongs to the cysteine-rich repeat secretory protein family.</text>
</comment>
<comment type="caution">
    <text evidence="3">Could be the product of a pseudogene.</text>
</comment>
<comment type="sequence caution" evidence="3">
    <conflict type="erroneous gene model prediction">
        <sequence resource="EMBL-CDS" id="AEE76584"/>
    </conflict>
</comment>
<comment type="sequence caution" evidence="3">
    <conflict type="erroneous gene model prediction">
        <sequence resource="EMBL-CDS" id="BAB01390"/>
    </conflict>
</comment>
<comment type="sequence caution" evidence="3">
    <conflict type="erroneous termination">
        <sequence resource="EMBL-CDS" id="BAB01390"/>
    </conflict>
    <text>Truncated C-terminus.</text>
</comment>
<evidence type="ECO:0000255" key="1"/>
<evidence type="ECO:0000255" key="2">
    <source>
        <dbReference type="PROSITE-ProRule" id="PRU00806"/>
    </source>
</evidence>
<evidence type="ECO:0000305" key="3"/>
<sequence length="254" mass="29361">MYSSYSLSKRLVSIPILAIQLLLIRSVSSLNLTNDYLNHKCLVSQGKYRPGDKYEDNLNFLTREVLSYNFPTGFIHISYGEAPSFVAIILQCRGDSYDSKCLSCYATALSGLRRRCQRNKGRVIWYDQCFLFINSIRSSPRKNDYRNVFSMHNPNNMIEDTELFNKKTRDFLYELMLEATTPNRTMMLYAAGEKKLGTKKLYAMVQCAQDILRCKGCLEWSINELSKCCHGKQGARVLGTECTLRYELYPFLRS</sequence>
<protein>
    <recommendedName>
        <fullName>Putative cysteine-rich repeat secretory protein 37</fullName>
    </recommendedName>
</protein>
<reference key="1">
    <citation type="journal article" date="2000" name="DNA Res.">
        <title>Structural analysis of Arabidopsis thaliana chromosome 3. I. Sequence features of the regions of 4,504,864 bp covered by sixty P1 and TAC clones.</title>
        <authorList>
            <person name="Sato S."/>
            <person name="Nakamura Y."/>
            <person name="Kaneko T."/>
            <person name="Katoh T."/>
            <person name="Asamizu E."/>
            <person name="Tabata S."/>
        </authorList>
    </citation>
    <scope>NUCLEOTIDE SEQUENCE [LARGE SCALE GENOMIC DNA]</scope>
    <source>
        <strain>cv. Columbia</strain>
    </source>
</reference>
<reference key="2">
    <citation type="journal article" date="2017" name="Plant J.">
        <title>Araport11: a complete reannotation of the Arabidopsis thaliana reference genome.</title>
        <authorList>
            <person name="Cheng C.Y."/>
            <person name="Krishnakumar V."/>
            <person name="Chan A.P."/>
            <person name="Thibaud-Nissen F."/>
            <person name="Schobel S."/>
            <person name="Town C.D."/>
        </authorList>
    </citation>
    <scope>GENOME REANNOTATION</scope>
    <source>
        <strain>cv. Columbia</strain>
    </source>
</reference>
<reference key="3">
    <citation type="journal article" date="2001" name="Plant Physiol.">
        <title>A superfamily of proteins with novel cysteine-rich repeats.</title>
        <authorList>
            <person name="Chen Z."/>
        </authorList>
    </citation>
    <scope>GENE FAMILY ORGANIZATION</scope>
    <scope>NOMENCLATURE</scope>
</reference>
<gene>
    <name type="primary">CRRSP37</name>
    <name type="ordered locus">At3g22057</name>
    <name type="ORF">MZN24.25</name>
</gene>
<keyword id="KW-1185">Reference proteome</keyword>
<keyword id="KW-0677">Repeat</keyword>
<keyword id="KW-0964">Secreted</keyword>
<keyword id="KW-0732">Signal</keyword>
<name>CRR37_ARATH</name>
<organism>
    <name type="scientific">Arabidopsis thaliana</name>
    <name type="common">Mouse-ear cress</name>
    <dbReference type="NCBI Taxonomy" id="3702"/>
    <lineage>
        <taxon>Eukaryota</taxon>
        <taxon>Viridiplantae</taxon>
        <taxon>Streptophyta</taxon>
        <taxon>Embryophyta</taxon>
        <taxon>Tracheophyta</taxon>
        <taxon>Spermatophyta</taxon>
        <taxon>Magnoliopsida</taxon>
        <taxon>eudicotyledons</taxon>
        <taxon>Gunneridae</taxon>
        <taxon>Pentapetalae</taxon>
        <taxon>rosids</taxon>
        <taxon>malvids</taxon>
        <taxon>Brassicales</taxon>
        <taxon>Brassicaceae</taxon>
        <taxon>Camelineae</taxon>
        <taxon>Arabidopsis</taxon>
    </lineage>
</organism>
<accession>Q9LRK0</accession>
<accession>F4IYY2</accession>